<organism>
    <name type="scientific">Schizosaccharomyces pombe (strain 972 / ATCC 24843)</name>
    <name type="common">Fission yeast</name>
    <dbReference type="NCBI Taxonomy" id="284812"/>
    <lineage>
        <taxon>Eukaryota</taxon>
        <taxon>Fungi</taxon>
        <taxon>Dikarya</taxon>
        <taxon>Ascomycota</taxon>
        <taxon>Taphrinomycotina</taxon>
        <taxon>Schizosaccharomycetes</taxon>
        <taxon>Schizosaccharomycetales</taxon>
        <taxon>Schizosaccharomycetaceae</taxon>
        <taxon>Schizosaccharomyces</taxon>
    </lineage>
</organism>
<name>RAD9_SCHPO</name>
<proteinExistence type="evidence at protein level"/>
<sequence>MEFTVSNVNLRDLARIFTNLSRIDDAVNWEINKNQIEITCLNSSRSGFSMVTLKKAFFDKYIFQPDSVLLTGLMTPTIRIRTQVKPILSVFRNKIFDFIPTVVTTNSKNGYGSESASRKDVIVENVQISISTGSECRIIFKFLCKHGVIKTYKISYEQTQTLHAVFDKSLSHNNFQINSKILKDLTEHFGQRTEELTIQPLQERVLLTSFTEEVVHNRDILKQPTQTTVSIDGKEFERVALNEGVSVTLSLREFRAAVILAEALGSSICAYYGVPGKPILLTFAKGKNSEIEAQFILATVVGSDEQEVSSMMGNRWQHSSTPASLFNSVERNNSLTAVAHNPPGSIGWQTDQSDSSRMFNSALDRSDETNGIKEPSTTNDAGQSLFLDGIPNESELAAFNNDVNDDAEFGPTQAEQSYHGIFSQED</sequence>
<feature type="chain" id="PRO_0000097157" description="DNA repair protein rad9">
    <location>
        <begin position="1"/>
        <end position="426"/>
    </location>
</feature>
<feature type="region of interest" description="Required for DNA repair function">
    <location>
        <begin position="1"/>
        <end position="147"/>
    </location>
</feature>
<feature type="region of interest" description="Disordered" evidence="1">
    <location>
        <begin position="402"/>
        <end position="426"/>
    </location>
</feature>
<feature type="mutagenesis site" description="In rad9-192; sensitive to ionizing radiation.">
    <original>L</original>
    <variation>P</variation>
    <location>
        <position position="196"/>
    </location>
</feature>
<keyword id="KW-0227">DNA damage</keyword>
<keyword id="KW-1185">Reference proteome</keyword>
<reference key="1">
    <citation type="journal article" date="1991" name="Nucleic Acids Res.">
        <title>Cloning and characterisation of the rad9 DNA repair gene from Schizosaccharomyces pombe.</title>
        <authorList>
            <person name="Murray J.M."/>
            <person name="Carr A.M."/>
            <person name="Lehmann A.R."/>
            <person name="Watts F.Z."/>
        </authorList>
    </citation>
    <scope>NUCLEOTIDE SEQUENCE [GENOMIC DNA]</scope>
    <scope>MUTANT RAD9-192</scope>
</reference>
<reference key="2">
    <citation type="journal article" date="1992" name="Mol. Gen. Genet.">
        <title>Molecular cloning and analysis of Schizosaccharomyces pombe rad9, a gene involved in DNA repair and mutagenesis.</title>
        <authorList>
            <person name="Lieberman H."/>
            <person name="Hopkins K.M."/>
            <person name="Laverty M."/>
            <person name="Chu H.M."/>
        </authorList>
    </citation>
    <scope>NUCLEOTIDE SEQUENCE [GENOMIC DNA]</scope>
</reference>
<reference key="3">
    <citation type="journal article" date="1995" name="Genetics">
        <title>Extragenic suppressors of Schizosaccharomyces pombe rad9 mutations uncouple radioresistance and hydroxyurea sensitivity from cell cycle checkpoint control.</title>
        <authorList>
            <person name="Lieberman H.B."/>
        </authorList>
    </citation>
    <scope>NUCLEOTIDE SEQUENCE [GENOMIC DNA]</scope>
</reference>
<reference key="4">
    <citation type="journal article" date="1994" name="Gene">
        <title>Schizosaccharomyces malidevorans and Sz. octosporus homologues of Sz. pombe rad9, a gene that mediates radioresistance and cell-cycle progression.</title>
        <authorList>
            <person name="Lieberman H.B."/>
            <person name="Hopkins K.M."/>
        </authorList>
    </citation>
    <scope>NUCLEOTIDE SEQUENCE [MRNA]</scope>
    <source>
        <strain>Malidevorans</strain>
    </source>
</reference>
<reference key="5">
    <citation type="journal article" date="2002" name="Nature">
        <title>The genome sequence of Schizosaccharomyces pombe.</title>
        <authorList>
            <person name="Wood V."/>
            <person name="Gwilliam R."/>
            <person name="Rajandream M.A."/>
            <person name="Lyne M.H."/>
            <person name="Lyne R."/>
            <person name="Stewart A."/>
            <person name="Sgouros J.G."/>
            <person name="Peat N."/>
            <person name="Hayles J."/>
            <person name="Baker S.G."/>
            <person name="Basham D."/>
            <person name="Bowman S."/>
            <person name="Brooks K."/>
            <person name="Brown D."/>
            <person name="Brown S."/>
            <person name="Chillingworth T."/>
            <person name="Churcher C.M."/>
            <person name="Collins M."/>
            <person name="Connor R."/>
            <person name="Cronin A."/>
            <person name="Davis P."/>
            <person name="Feltwell T."/>
            <person name="Fraser A."/>
            <person name="Gentles S."/>
            <person name="Goble A."/>
            <person name="Hamlin N."/>
            <person name="Harris D.E."/>
            <person name="Hidalgo J."/>
            <person name="Hodgson G."/>
            <person name="Holroyd S."/>
            <person name="Hornsby T."/>
            <person name="Howarth S."/>
            <person name="Huckle E.J."/>
            <person name="Hunt S."/>
            <person name="Jagels K."/>
            <person name="James K.D."/>
            <person name="Jones L."/>
            <person name="Jones M."/>
            <person name="Leather S."/>
            <person name="McDonald S."/>
            <person name="McLean J."/>
            <person name="Mooney P."/>
            <person name="Moule S."/>
            <person name="Mungall K.L."/>
            <person name="Murphy L.D."/>
            <person name="Niblett D."/>
            <person name="Odell C."/>
            <person name="Oliver K."/>
            <person name="O'Neil S."/>
            <person name="Pearson D."/>
            <person name="Quail M.A."/>
            <person name="Rabbinowitsch E."/>
            <person name="Rutherford K.M."/>
            <person name="Rutter S."/>
            <person name="Saunders D."/>
            <person name="Seeger K."/>
            <person name="Sharp S."/>
            <person name="Skelton J."/>
            <person name="Simmonds M.N."/>
            <person name="Squares R."/>
            <person name="Squares S."/>
            <person name="Stevens K."/>
            <person name="Taylor K."/>
            <person name="Taylor R.G."/>
            <person name="Tivey A."/>
            <person name="Walsh S.V."/>
            <person name="Warren T."/>
            <person name="Whitehead S."/>
            <person name="Woodward J.R."/>
            <person name="Volckaert G."/>
            <person name="Aert R."/>
            <person name="Robben J."/>
            <person name="Grymonprez B."/>
            <person name="Weltjens I."/>
            <person name="Vanstreels E."/>
            <person name="Rieger M."/>
            <person name="Schaefer M."/>
            <person name="Mueller-Auer S."/>
            <person name="Gabel C."/>
            <person name="Fuchs M."/>
            <person name="Duesterhoeft A."/>
            <person name="Fritzc C."/>
            <person name="Holzer E."/>
            <person name="Moestl D."/>
            <person name="Hilbert H."/>
            <person name="Borzym K."/>
            <person name="Langer I."/>
            <person name="Beck A."/>
            <person name="Lehrach H."/>
            <person name="Reinhardt R."/>
            <person name="Pohl T.M."/>
            <person name="Eger P."/>
            <person name="Zimmermann W."/>
            <person name="Wedler H."/>
            <person name="Wambutt R."/>
            <person name="Purnelle B."/>
            <person name="Goffeau A."/>
            <person name="Cadieu E."/>
            <person name="Dreano S."/>
            <person name="Gloux S."/>
            <person name="Lelaure V."/>
            <person name="Mottier S."/>
            <person name="Galibert F."/>
            <person name="Aves S.J."/>
            <person name="Xiang Z."/>
            <person name="Hunt C."/>
            <person name="Moore K."/>
            <person name="Hurst S.M."/>
            <person name="Lucas M."/>
            <person name="Rochet M."/>
            <person name="Gaillardin C."/>
            <person name="Tallada V.A."/>
            <person name="Garzon A."/>
            <person name="Thode G."/>
            <person name="Daga R.R."/>
            <person name="Cruzado L."/>
            <person name="Jimenez J."/>
            <person name="Sanchez M."/>
            <person name="del Rey F."/>
            <person name="Benito J."/>
            <person name="Dominguez A."/>
            <person name="Revuelta J.L."/>
            <person name="Moreno S."/>
            <person name="Armstrong J."/>
            <person name="Forsburg S.L."/>
            <person name="Cerutti L."/>
            <person name="Lowe T."/>
            <person name="McCombie W.R."/>
            <person name="Paulsen I."/>
            <person name="Potashkin J."/>
            <person name="Shpakovski G.V."/>
            <person name="Ussery D."/>
            <person name="Barrell B.G."/>
            <person name="Nurse P."/>
        </authorList>
    </citation>
    <scope>NUCLEOTIDE SEQUENCE [LARGE SCALE GENOMIC DNA]</scope>
    <source>
        <strain>972 / ATCC 24843</strain>
    </source>
</reference>
<gene>
    <name type="primary">rad9</name>
    <name type="ORF">SPAC664.07c</name>
</gene>
<comment type="function">
    <text>Acts in DNA repair and mutagenesis. Involved in promoting resistance to ionizing radiation and UV light, as well as regulating cell cycle progression after irradiation. Repressor of entry into mitosis that is activated by chromosome breaks.</text>
</comment>
<comment type="similarity">
    <text evidence="2">Belongs to the rad9 family.</text>
</comment>
<dbReference type="EMBL" id="X58231">
    <property type="protein sequence ID" value="CAA41189.1"/>
    <property type="molecule type" value="Genomic_DNA"/>
</dbReference>
<dbReference type="EMBL" id="X64648">
    <property type="protein sequence ID" value="CAA45919.1"/>
    <property type="molecule type" value="Genomic_DNA"/>
</dbReference>
<dbReference type="EMBL" id="X65864">
    <property type="protein sequence ID" value="CAA46693.1"/>
    <property type="molecule type" value="Genomic_DNA"/>
</dbReference>
<dbReference type="EMBL" id="X77276">
    <property type="protein sequence ID" value="CAA54491.1"/>
    <property type="molecule type" value="mRNA"/>
</dbReference>
<dbReference type="EMBL" id="CU329670">
    <property type="protein sequence ID" value="CAB65808.1"/>
    <property type="molecule type" value="Genomic_DNA"/>
</dbReference>
<dbReference type="PIR" id="S26143">
    <property type="entry name" value="S26143"/>
</dbReference>
<dbReference type="PIR" id="T52475">
    <property type="entry name" value="T52475"/>
</dbReference>
<dbReference type="RefSeq" id="NP_593455.1">
    <property type="nucleotide sequence ID" value="NM_001018888.2"/>
</dbReference>
<dbReference type="SMR" id="P26306"/>
<dbReference type="BioGRID" id="279961">
    <property type="interactions" value="78"/>
</dbReference>
<dbReference type="FunCoup" id="P26306">
    <property type="interactions" value="387"/>
</dbReference>
<dbReference type="IntAct" id="P26306">
    <property type="interactions" value="1"/>
</dbReference>
<dbReference type="STRING" id="284812.P26306"/>
<dbReference type="iPTMnet" id="P26306"/>
<dbReference type="PaxDb" id="4896-SPAC664.07c.1"/>
<dbReference type="EnsemblFungi" id="SPAC664.07c.1">
    <property type="protein sequence ID" value="SPAC664.07c.1:pep"/>
    <property type="gene ID" value="SPAC664.07c"/>
</dbReference>
<dbReference type="GeneID" id="2543544"/>
<dbReference type="KEGG" id="spo:2543544"/>
<dbReference type="PomBase" id="SPAC664.07c">
    <property type="gene designation" value="rad9"/>
</dbReference>
<dbReference type="VEuPathDB" id="FungiDB:SPAC664.07c"/>
<dbReference type="eggNOG" id="KOG2810">
    <property type="taxonomic scope" value="Eukaryota"/>
</dbReference>
<dbReference type="HOGENOM" id="CLU_030657_1_0_1"/>
<dbReference type="InParanoid" id="P26306"/>
<dbReference type="OMA" id="HFGQRTE"/>
<dbReference type="PhylomeDB" id="P26306"/>
<dbReference type="Reactome" id="R-SPO-176187">
    <property type="pathway name" value="Activation of ATR in response to replication stress"/>
</dbReference>
<dbReference type="PRO" id="PR:P26306"/>
<dbReference type="Proteomes" id="UP000002485">
    <property type="component" value="Chromosome I"/>
</dbReference>
<dbReference type="GO" id="GO:0030896">
    <property type="term" value="C:checkpoint clamp complex"/>
    <property type="evidence" value="ECO:0000314"/>
    <property type="project" value="PomBase"/>
</dbReference>
<dbReference type="GO" id="GO:0000785">
    <property type="term" value="C:chromatin"/>
    <property type="evidence" value="ECO:0000314"/>
    <property type="project" value="PomBase"/>
</dbReference>
<dbReference type="GO" id="GO:0140445">
    <property type="term" value="C:chromosome, telomeric repeat region"/>
    <property type="evidence" value="ECO:0000314"/>
    <property type="project" value="PomBase"/>
</dbReference>
<dbReference type="GO" id="GO:0005737">
    <property type="term" value="C:cytoplasm"/>
    <property type="evidence" value="ECO:0000314"/>
    <property type="project" value="PomBase"/>
</dbReference>
<dbReference type="GO" id="GO:0005829">
    <property type="term" value="C:cytosol"/>
    <property type="evidence" value="ECO:0007005"/>
    <property type="project" value="PomBase"/>
</dbReference>
<dbReference type="GO" id="GO:0005634">
    <property type="term" value="C:nucleus"/>
    <property type="evidence" value="ECO:0000314"/>
    <property type="project" value="PomBase"/>
</dbReference>
<dbReference type="GO" id="GO:0035861">
    <property type="term" value="C:site of double-strand break"/>
    <property type="evidence" value="ECO:0000314"/>
    <property type="project" value="PomBase"/>
</dbReference>
<dbReference type="GO" id="GO:0030295">
    <property type="term" value="F:protein kinase activator activity"/>
    <property type="evidence" value="ECO:0000314"/>
    <property type="project" value="PomBase"/>
</dbReference>
<dbReference type="GO" id="GO:0035591">
    <property type="term" value="F:signaling adaptor activity"/>
    <property type="evidence" value="ECO:0000316"/>
    <property type="project" value="PomBase"/>
</dbReference>
<dbReference type="GO" id="GO:0071479">
    <property type="term" value="P:cellular response to ionizing radiation"/>
    <property type="evidence" value="ECO:0000318"/>
    <property type="project" value="GO_Central"/>
</dbReference>
<dbReference type="GO" id="GO:0006281">
    <property type="term" value="P:DNA repair"/>
    <property type="evidence" value="ECO:0000318"/>
    <property type="project" value="GO_Central"/>
</dbReference>
<dbReference type="GO" id="GO:0000076">
    <property type="term" value="P:DNA replication checkpoint signaling"/>
    <property type="evidence" value="ECO:0000318"/>
    <property type="project" value="GO_Central"/>
</dbReference>
<dbReference type="GO" id="GO:0044773">
    <property type="term" value="P:mitotic DNA damage checkpoint signaling"/>
    <property type="evidence" value="ECO:0000269"/>
    <property type="project" value="PomBase"/>
</dbReference>
<dbReference type="GO" id="GO:0033314">
    <property type="term" value="P:mitotic DNA replication checkpoint signaling"/>
    <property type="evidence" value="ECO:0000315"/>
    <property type="project" value="PomBase"/>
</dbReference>
<dbReference type="GO" id="GO:0031573">
    <property type="term" value="P:mitotic intra-S DNA damage checkpoint signaling"/>
    <property type="evidence" value="ECO:0000315"/>
    <property type="project" value="PomBase"/>
</dbReference>
<dbReference type="GO" id="GO:0000723">
    <property type="term" value="P:telomere maintenance"/>
    <property type="evidence" value="ECO:0000315"/>
    <property type="project" value="PomBase"/>
</dbReference>
<dbReference type="Gene3D" id="3.70.10.10">
    <property type="match status" value="1"/>
</dbReference>
<dbReference type="InterPro" id="IPR046938">
    <property type="entry name" value="DNA_clamp_sf"/>
</dbReference>
<dbReference type="InterPro" id="IPR026584">
    <property type="entry name" value="Rad9"/>
</dbReference>
<dbReference type="InterPro" id="IPR007268">
    <property type="entry name" value="Rad9/Ddc1"/>
</dbReference>
<dbReference type="PANTHER" id="PTHR15237:SF0">
    <property type="entry name" value="CELL CYCLE CHECKPOINT CONTROL PROTEIN"/>
    <property type="match status" value="1"/>
</dbReference>
<dbReference type="PANTHER" id="PTHR15237">
    <property type="entry name" value="DNA REPAIR PROTEIN RAD9"/>
    <property type="match status" value="1"/>
</dbReference>
<dbReference type="Pfam" id="PF04139">
    <property type="entry name" value="Rad9"/>
    <property type="match status" value="1"/>
</dbReference>
<dbReference type="PIRSF" id="PIRSF009303">
    <property type="entry name" value="Cell_cycle_RAD9"/>
    <property type="match status" value="1"/>
</dbReference>
<dbReference type="SUPFAM" id="SSF55979">
    <property type="entry name" value="DNA clamp"/>
    <property type="match status" value="1"/>
</dbReference>
<protein>
    <recommendedName>
        <fullName>DNA repair protein rad9</fullName>
    </recommendedName>
</protein>
<accession>P26306</accession>
<accession>Q10455</accession>
<evidence type="ECO:0000256" key="1">
    <source>
        <dbReference type="SAM" id="MobiDB-lite"/>
    </source>
</evidence>
<evidence type="ECO:0000305" key="2"/>